<proteinExistence type="inferred from homology"/>
<name>FABA_SHISS</name>
<keyword id="KW-0963">Cytoplasm</keyword>
<keyword id="KW-0275">Fatty acid biosynthesis</keyword>
<keyword id="KW-0276">Fatty acid metabolism</keyword>
<keyword id="KW-0413">Isomerase</keyword>
<keyword id="KW-0444">Lipid biosynthesis</keyword>
<keyword id="KW-0443">Lipid metabolism</keyword>
<keyword id="KW-0456">Lyase</keyword>
<keyword id="KW-1185">Reference proteome</keyword>
<sequence>MVDKRESYTKEDLLASGRGELFGAKGPQLPAPNMLMMDRVVKMTETGGNFDKGYVEAELDINPDLWFFGCHFIGDPVMPGCLGLDAMWQLVGFYLGWLGGEGKGRALGVGEVKFTGQVLPTAKKVTYRIHFKRIVNRRLIMGLADGEVLVDGRLIYTASDLKVGLFQDTSAF</sequence>
<feature type="chain" id="PRO_0000267756" description="3-hydroxydecanoyl-[acyl-carrier-protein] dehydratase">
    <location>
        <begin position="1"/>
        <end position="172"/>
    </location>
</feature>
<feature type="active site" evidence="1">
    <location>
        <position position="71"/>
    </location>
</feature>
<comment type="function">
    <text evidence="1">Necessary for the introduction of cis unsaturation into fatty acids. Catalyzes the dehydration of (3R)-3-hydroxydecanoyl-ACP to E-(2)-decenoyl-ACP and then its isomerization to Z-(3)-decenoyl-ACP. Can catalyze the dehydratase reaction for beta-hydroxyacyl-ACPs with saturated chain lengths up to 16:0, being most active on intermediate chain length.</text>
</comment>
<comment type="catalytic activity">
    <reaction evidence="1">
        <text>a (3R)-hydroxyacyl-[ACP] = a (2E)-enoyl-[ACP] + H2O</text>
        <dbReference type="Rhea" id="RHEA:13097"/>
        <dbReference type="Rhea" id="RHEA-COMP:9925"/>
        <dbReference type="Rhea" id="RHEA-COMP:9945"/>
        <dbReference type="ChEBI" id="CHEBI:15377"/>
        <dbReference type="ChEBI" id="CHEBI:78784"/>
        <dbReference type="ChEBI" id="CHEBI:78827"/>
        <dbReference type="EC" id="4.2.1.59"/>
    </reaction>
</comment>
<comment type="catalytic activity">
    <reaction evidence="1">
        <text>(3R)-hydroxydecanoyl-[ACP] = (2E)-decenoyl-[ACP] + H2O</text>
        <dbReference type="Rhea" id="RHEA:41860"/>
        <dbReference type="Rhea" id="RHEA-COMP:9638"/>
        <dbReference type="Rhea" id="RHEA-COMP:9639"/>
        <dbReference type="ChEBI" id="CHEBI:15377"/>
        <dbReference type="ChEBI" id="CHEBI:78466"/>
        <dbReference type="ChEBI" id="CHEBI:78467"/>
    </reaction>
</comment>
<comment type="catalytic activity">
    <reaction evidence="1">
        <text>(2E)-decenoyl-[ACP] = (3Z)-decenoyl-[ACP]</text>
        <dbReference type="Rhea" id="RHEA:23568"/>
        <dbReference type="Rhea" id="RHEA-COMP:9639"/>
        <dbReference type="Rhea" id="RHEA-COMP:9927"/>
        <dbReference type="ChEBI" id="CHEBI:78467"/>
        <dbReference type="ChEBI" id="CHEBI:78798"/>
        <dbReference type="EC" id="5.3.3.14"/>
    </reaction>
</comment>
<comment type="pathway">
    <text evidence="1">Lipid metabolism; fatty acid biosynthesis.</text>
</comment>
<comment type="subunit">
    <text evidence="1">Homodimer.</text>
</comment>
<comment type="subcellular location">
    <subcellularLocation>
        <location evidence="1">Cytoplasm</location>
    </subcellularLocation>
</comment>
<comment type="similarity">
    <text evidence="1">Belongs to the thioester dehydratase family. FabA subfamily.</text>
</comment>
<accession>Q3Z3G7</accession>
<protein>
    <recommendedName>
        <fullName evidence="1">3-hydroxydecanoyl-[acyl-carrier-protein] dehydratase</fullName>
        <ecNumber evidence="1">4.2.1.59</ecNumber>
    </recommendedName>
    <alternativeName>
        <fullName evidence="1">3-hydroxyacyl-[acyl-carrier-protein] dehydratase FabA</fullName>
    </alternativeName>
    <alternativeName>
        <fullName evidence="1">Beta-hydroxydecanoyl thioester dehydrase</fullName>
    </alternativeName>
    <alternativeName>
        <fullName evidence="1">Trans-2-decenoyl-[acyl-carrier-protein] isomerase</fullName>
        <ecNumber evidence="1">5.3.3.14</ecNumber>
    </alternativeName>
</protein>
<organism>
    <name type="scientific">Shigella sonnei (strain Ss046)</name>
    <dbReference type="NCBI Taxonomy" id="300269"/>
    <lineage>
        <taxon>Bacteria</taxon>
        <taxon>Pseudomonadati</taxon>
        <taxon>Pseudomonadota</taxon>
        <taxon>Gammaproteobacteria</taxon>
        <taxon>Enterobacterales</taxon>
        <taxon>Enterobacteriaceae</taxon>
        <taxon>Shigella</taxon>
    </lineage>
</organism>
<reference key="1">
    <citation type="journal article" date="2005" name="Nucleic Acids Res.">
        <title>Genome dynamics and diversity of Shigella species, the etiologic agents of bacillary dysentery.</title>
        <authorList>
            <person name="Yang F."/>
            <person name="Yang J."/>
            <person name="Zhang X."/>
            <person name="Chen L."/>
            <person name="Jiang Y."/>
            <person name="Yan Y."/>
            <person name="Tang X."/>
            <person name="Wang J."/>
            <person name="Xiong Z."/>
            <person name="Dong J."/>
            <person name="Xue Y."/>
            <person name="Zhu Y."/>
            <person name="Xu X."/>
            <person name="Sun L."/>
            <person name="Chen S."/>
            <person name="Nie H."/>
            <person name="Peng J."/>
            <person name="Xu J."/>
            <person name="Wang Y."/>
            <person name="Yuan Z."/>
            <person name="Wen Y."/>
            <person name="Yao Z."/>
            <person name="Shen Y."/>
            <person name="Qiang B."/>
            <person name="Hou Y."/>
            <person name="Yu J."/>
            <person name="Jin Q."/>
        </authorList>
    </citation>
    <scope>NUCLEOTIDE SEQUENCE [LARGE SCALE GENOMIC DNA]</scope>
    <source>
        <strain>Ss046</strain>
    </source>
</reference>
<dbReference type="EC" id="4.2.1.59" evidence="1"/>
<dbReference type="EC" id="5.3.3.14" evidence="1"/>
<dbReference type="EMBL" id="CP000038">
    <property type="protein sequence ID" value="AAZ87695.1"/>
    <property type="molecule type" value="Genomic_DNA"/>
</dbReference>
<dbReference type="RefSeq" id="WP_000227927.1">
    <property type="nucleotide sequence ID" value="NC_007384.1"/>
</dbReference>
<dbReference type="SMR" id="Q3Z3G7"/>
<dbReference type="GeneID" id="93776460"/>
<dbReference type="KEGG" id="ssn:SSON_0958"/>
<dbReference type="HOGENOM" id="CLU_097925_0_0_6"/>
<dbReference type="UniPathway" id="UPA00094"/>
<dbReference type="Proteomes" id="UP000002529">
    <property type="component" value="Chromosome"/>
</dbReference>
<dbReference type="GO" id="GO:0005737">
    <property type="term" value="C:cytoplasm"/>
    <property type="evidence" value="ECO:0007669"/>
    <property type="project" value="UniProtKB-SubCell"/>
</dbReference>
<dbReference type="GO" id="GO:0019171">
    <property type="term" value="F:(3R)-hydroxyacyl-[acyl-carrier-protein] dehydratase activity"/>
    <property type="evidence" value="ECO:0007669"/>
    <property type="project" value="UniProtKB-UniRule"/>
</dbReference>
<dbReference type="GO" id="GO:0034017">
    <property type="term" value="F:trans-2-decenoyl-acyl-carrier-protein isomerase activity"/>
    <property type="evidence" value="ECO:0007669"/>
    <property type="project" value="UniProtKB-UniRule"/>
</dbReference>
<dbReference type="GO" id="GO:0006636">
    <property type="term" value="P:unsaturated fatty acid biosynthetic process"/>
    <property type="evidence" value="ECO:0007669"/>
    <property type="project" value="UniProtKB-UniRule"/>
</dbReference>
<dbReference type="CDD" id="cd01287">
    <property type="entry name" value="FabA"/>
    <property type="match status" value="1"/>
</dbReference>
<dbReference type="FunFam" id="3.10.129.10:FF:000003">
    <property type="entry name" value="3-hydroxydecanoyl-[acyl-carrier-protein] dehydratase"/>
    <property type="match status" value="1"/>
</dbReference>
<dbReference type="Gene3D" id="3.10.129.10">
    <property type="entry name" value="Hotdog Thioesterase"/>
    <property type="match status" value="1"/>
</dbReference>
<dbReference type="HAMAP" id="MF_00405">
    <property type="entry name" value="FabA"/>
    <property type="match status" value="1"/>
</dbReference>
<dbReference type="InterPro" id="IPR010083">
    <property type="entry name" value="FabA"/>
</dbReference>
<dbReference type="InterPro" id="IPR013114">
    <property type="entry name" value="FabA_FabZ"/>
</dbReference>
<dbReference type="InterPro" id="IPR029069">
    <property type="entry name" value="HotDog_dom_sf"/>
</dbReference>
<dbReference type="NCBIfam" id="TIGR01749">
    <property type="entry name" value="fabA"/>
    <property type="match status" value="1"/>
</dbReference>
<dbReference type="NCBIfam" id="NF003509">
    <property type="entry name" value="PRK05174.1"/>
    <property type="match status" value="1"/>
</dbReference>
<dbReference type="PANTHER" id="PTHR30272">
    <property type="entry name" value="3-HYDROXYACYL-[ACYL-CARRIER-PROTEIN] DEHYDRATASE"/>
    <property type="match status" value="1"/>
</dbReference>
<dbReference type="PANTHER" id="PTHR30272:SF8">
    <property type="entry name" value="3-HYDROXYDECANOYL-[ACYL-CARRIER-PROTEIN] DEHYDRATASE"/>
    <property type="match status" value="1"/>
</dbReference>
<dbReference type="Pfam" id="PF07977">
    <property type="entry name" value="FabA"/>
    <property type="match status" value="1"/>
</dbReference>
<dbReference type="SUPFAM" id="SSF54637">
    <property type="entry name" value="Thioesterase/thiol ester dehydrase-isomerase"/>
    <property type="match status" value="1"/>
</dbReference>
<evidence type="ECO:0000255" key="1">
    <source>
        <dbReference type="HAMAP-Rule" id="MF_00405"/>
    </source>
</evidence>
<gene>
    <name evidence="1" type="primary">fabA</name>
    <name type="ordered locus">SSON_0958</name>
</gene>